<protein>
    <recommendedName>
        <fullName evidence="1">6,7-dimethyl-8-ribityllumazine synthase</fullName>
        <shortName evidence="1">DMRL synthase</shortName>
        <shortName evidence="1">LS</shortName>
        <shortName evidence="1">Lumazine synthase</shortName>
        <ecNumber evidence="1">2.5.1.78</ecNumber>
    </recommendedName>
</protein>
<gene>
    <name evidence="1" type="primary">ribH</name>
    <name type="ordered locus">BceJ2315_30000</name>
    <name type="ORF">BCAL3054</name>
</gene>
<accession>B4EBT8</accession>
<sequence>MEIGQYQPNLEGDGLRIGIVQSRFNEPVCNGLADACVEELERLGVTGEDVLLVSVPGALEIPLALQKLAESGQFDALIALGAVIRGETYHFELVSNESGAGITRIGLDFNLPIANAVLTTENDEQAVARMTEKGRDAARVAVEMANLTMALDQLGDDEDEEEDEDDEEERA</sequence>
<keyword id="KW-0686">Riboflavin biosynthesis</keyword>
<keyword id="KW-0808">Transferase</keyword>
<reference key="1">
    <citation type="journal article" date="2009" name="J. Bacteriol.">
        <title>The genome of Burkholderia cenocepacia J2315, an epidemic pathogen of cystic fibrosis patients.</title>
        <authorList>
            <person name="Holden M.T."/>
            <person name="Seth-Smith H.M."/>
            <person name="Crossman L.C."/>
            <person name="Sebaihia M."/>
            <person name="Bentley S.D."/>
            <person name="Cerdeno-Tarraga A.M."/>
            <person name="Thomson N.R."/>
            <person name="Bason N."/>
            <person name="Quail M.A."/>
            <person name="Sharp S."/>
            <person name="Cherevach I."/>
            <person name="Churcher C."/>
            <person name="Goodhead I."/>
            <person name="Hauser H."/>
            <person name="Holroyd N."/>
            <person name="Mungall K."/>
            <person name="Scott P."/>
            <person name="Walker D."/>
            <person name="White B."/>
            <person name="Rose H."/>
            <person name="Iversen P."/>
            <person name="Mil-Homens D."/>
            <person name="Rocha E.P."/>
            <person name="Fialho A.M."/>
            <person name="Baldwin A."/>
            <person name="Dowson C."/>
            <person name="Barrell B.G."/>
            <person name="Govan J.R."/>
            <person name="Vandamme P."/>
            <person name="Hart C.A."/>
            <person name="Mahenthiralingam E."/>
            <person name="Parkhill J."/>
        </authorList>
    </citation>
    <scope>NUCLEOTIDE SEQUENCE [LARGE SCALE GENOMIC DNA]</scope>
    <source>
        <strain>ATCC BAA-245 / DSM 16553 / LMG 16656 / NCTC 13227 / J2315 / CF5610</strain>
    </source>
</reference>
<proteinExistence type="inferred from homology"/>
<organism>
    <name type="scientific">Burkholderia cenocepacia (strain ATCC BAA-245 / DSM 16553 / LMG 16656 / NCTC 13227 / J2315 / CF5610)</name>
    <name type="common">Burkholderia cepacia (strain J2315)</name>
    <dbReference type="NCBI Taxonomy" id="216591"/>
    <lineage>
        <taxon>Bacteria</taxon>
        <taxon>Pseudomonadati</taxon>
        <taxon>Pseudomonadota</taxon>
        <taxon>Betaproteobacteria</taxon>
        <taxon>Burkholderiales</taxon>
        <taxon>Burkholderiaceae</taxon>
        <taxon>Burkholderia</taxon>
        <taxon>Burkholderia cepacia complex</taxon>
    </lineage>
</organism>
<name>RISB_BURCJ</name>
<dbReference type="EC" id="2.5.1.78" evidence="1"/>
<dbReference type="EMBL" id="AM747720">
    <property type="protein sequence ID" value="CAR53376.1"/>
    <property type="molecule type" value="Genomic_DNA"/>
</dbReference>
<dbReference type="RefSeq" id="WP_006476661.1">
    <property type="nucleotide sequence ID" value="NC_011000.1"/>
</dbReference>
<dbReference type="SMR" id="B4EBT8"/>
<dbReference type="GeneID" id="83047708"/>
<dbReference type="KEGG" id="bcj:BCAL3054"/>
<dbReference type="eggNOG" id="COG0054">
    <property type="taxonomic scope" value="Bacteria"/>
</dbReference>
<dbReference type="HOGENOM" id="CLU_089358_1_2_4"/>
<dbReference type="BioCyc" id="BCEN216591:G1G1V-3386-MONOMER"/>
<dbReference type="UniPathway" id="UPA00275">
    <property type="reaction ID" value="UER00404"/>
</dbReference>
<dbReference type="Proteomes" id="UP000001035">
    <property type="component" value="Chromosome 1"/>
</dbReference>
<dbReference type="GO" id="GO:0005829">
    <property type="term" value="C:cytosol"/>
    <property type="evidence" value="ECO:0007669"/>
    <property type="project" value="TreeGrafter"/>
</dbReference>
<dbReference type="GO" id="GO:0009349">
    <property type="term" value="C:riboflavin synthase complex"/>
    <property type="evidence" value="ECO:0007669"/>
    <property type="project" value="InterPro"/>
</dbReference>
<dbReference type="GO" id="GO:0000906">
    <property type="term" value="F:6,7-dimethyl-8-ribityllumazine synthase activity"/>
    <property type="evidence" value="ECO:0007669"/>
    <property type="project" value="UniProtKB-UniRule"/>
</dbReference>
<dbReference type="GO" id="GO:0009231">
    <property type="term" value="P:riboflavin biosynthetic process"/>
    <property type="evidence" value="ECO:0007669"/>
    <property type="project" value="UniProtKB-UniRule"/>
</dbReference>
<dbReference type="CDD" id="cd09209">
    <property type="entry name" value="Lumazine_synthase-I"/>
    <property type="match status" value="1"/>
</dbReference>
<dbReference type="Gene3D" id="3.40.50.960">
    <property type="entry name" value="Lumazine/riboflavin synthase"/>
    <property type="match status" value="1"/>
</dbReference>
<dbReference type="HAMAP" id="MF_00178">
    <property type="entry name" value="Lumazine_synth"/>
    <property type="match status" value="1"/>
</dbReference>
<dbReference type="InterPro" id="IPR034964">
    <property type="entry name" value="LS"/>
</dbReference>
<dbReference type="InterPro" id="IPR002180">
    <property type="entry name" value="LS/RS"/>
</dbReference>
<dbReference type="InterPro" id="IPR036467">
    <property type="entry name" value="LS/RS_sf"/>
</dbReference>
<dbReference type="NCBIfam" id="TIGR00114">
    <property type="entry name" value="lumazine-synth"/>
    <property type="match status" value="1"/>
</dbReference>
<dbReference type="PANTHER" id="PTHR21058:SF0">
    <property type="entry name" value="6,7-DIMETHYL-8-RIBITYLLUMAZINE SYNTHASE"/>
    <property type="match status" value="1"/>
</dbReference>
<dbReference type="PANTHER" id="PTHR21058">
    <property type="entry name" value="6,7-DIMETHYL-8-RIBITYLLUMAZINE SYNTHASE DMRL SYNTHASE LUMAZINE SYNTHASE"/>
    <property type="match status" value="1"/>
</dbReference>
<dbReference type="Pfam" id="PF00885">
    <property type="entry name" value="DMRL_synthase"/>
    <property type="match status" value="1"/>
</dbReference>
<dbReference type="SUPFAM" id="SSF52121">
    <property type="entry name" value="Lumazine synthase"/>
    <property type="match status" value="1"/>
</dbReference>
<feature type="chain" id="PRO_1000098166" description="6,7-dimethyl-8-ribityllumazine synthase">
    <location>
        <begin position="1"/>
        <end position="171"/>
    </location>
</feature>
<feature type="region of interest" description="Disordered" evidence="2">
    <location>
        <begin position="150"/>
        <end position="171"/>
    </location>
</feature>
<feature type="compositionally biased region" description="Acidic residues" evidence="2">
    <location>
        <begin position="154"/>
        <end position="171"/>
    </location>
</feature>
<feature type="active site" description="Proton donor" evidence="1">
    <location>
        <position position="90"/>
    </location>
</feature>
<feature type="binding site" evidence="1">
    <location>
        <position position="24"/>
    </location>
    <ligand>
        <name>5-amino-6-(D-ribitylamino)uracil</name>
        <dbReference type="ChEBI" id="CHEBI:15934"/>
    </ligand>
</feature>
<feature type="binding site" evidence="1">
    <location>
        <begin position="58"/>
        <end position="60"/>
    </location>
    <ligand>
        <name>5-amino-6-(D-ribitylamino)uracil</name>
        <dbReference type="ChEBI" id="CHEBI:15934"/>
    </ligand>
</feature>
<feature type="binding site" evidence="1">
    <location>
        <begin position="82"/>
        <end position="84"/>
    </location>
    <ligand>
        <name>5-amino-6-(D-ribitylamino)uracil</name>
        <dbReference type="ChEBI" id="CHEBI:15934"/>
    </ligand>
</feature>
<feature type="binding site" evidence="1">
    <location>
        <begin position="87"/>
        <end position="88"/>
    </location>
    <ligand>
        <name>(2S)-2-hydroxy-3-oxobutyl phosphate</name>
        <dbReference type="ChEBI" id="CHEBI:58830"/>
    </ligand>
</feature>
<feature type="binding site" evidence="1">
    <location>
        <position position="115"/>
    </location>
    <ligand>
        <name>5-amino-6-(D-ribitylamino)uracil</name>
        <dbReference type="ChEBI" id="CHEBI:15934"/>
    </ligand>
</feature>
<feature type="binding site" evidence="1">
    <location>
        <position position="129"/>
    </location>
    <ligand>
        <name>(2S)-2-hydroxy-3-oxobutyl phosphate</name>
        <dbReference type="ChEBI" id="CHEBI:58830"/>
    </ligand>
</feature>
<evidence type="ECO:0000255" key="1">
    <source>
        <dbReference type="HAMAP-Rule" id="MF_00178"/>
    </source>
</evidence>
<evidence type="ECO:0000256" key="2">
    <source>
        <dbReference type="SAM" id="MobiDB-lite"/>
    </source>
</evidence>
<comment type="function">
    <text evidence="1">Catalyzes the formation of 6,7-dimethyl-8-ribityllumazine by condensation of 5-amino-6-(D-ribitylamino)uracil with 3,4-dihydroxy-2-butanone 4-phosphate. This is the penultimate step in the biosynthesis of riboflavin.</text>
</comment>
<comment type="catalytic activity">
    <reaction evidence="1">
        <text>(2S)-2-hydroxy-3-oxobutyl phosphate + 5-amino-6-(D-ribitylamino)uracil = 6,7-dimethyl-8-(1-D-ribityl)lumazine + phosphate + 2 H2O + H(+)</text>
        <dbReference type="Rhea" id="RHEA:26152"/>
        <dbReference type="ChEBI" id="CHEBI:15377"/>
        <dbReference type="ChEBI" id="CHEBI:15378"/>
        <dbReference type="ChEBI" id="CHEBI:15934"/>
        <dbReference type="ChEBI" id="CHEBI:43474"/>
        <dbReference type="ChEBI" id="CHEBI:58201"/>
        <dbReference type="ChEBI" id="CHEBI:58830"/>
        <dbReference type="EC" id="2.5.1.78"/>
    </reaction>
</comment>
<comment type="pathway">
    <text evidence="1">Cofactor biosynthesis; riboflavin biosynthesis; riboflavin from 2-hydroxy-3-oxobutyl phosphate and 5-amino-6-(D-ribitylamino)uracil: step 1/2.</text>
</comment>
<comment type="similarity">
    <text evidence="1">Belongs to the DMRL synthase family.</text>
</comment>